<name>UVRB_STRU0</name>
<comment type="function">
    <text evidence="1">The UvrABC repair system catalyzes the recognition and processing of DNA lesions. A damage recognition complex composed of 2 UvrA and 2 UvrB subunits scans DNA for abnormalities. Upon binding of the UvrA(2)B(2) complex to a putative damaged site, the DNA wraps around one UvrB monomer. DNA wrap is dependent on ATP binding by UvrB and probably causes local melting of the DNA helix, facilitating insertion of UvrB beta-hairpin between the DNA strands. Then UvrB probes one DNA strand for the presence of a lesion. If a lesion is found the UvrA subunits dissociate and the UvrB-DNA preincision complex is formed. This complex is subsequently bound by UvrC and the second UvrB is released. If no lesion is found, the DNA wraps around the other UvrB subunit that will check the other stand for damage.</text>
</comment>
<comment type="subunit">
    <text evidence="1">Forms a heterotetramer with UvrA during the search for lesions. Interacts with UvrC in an incision complex.</text>
</comment>
<comment type="subcellular location">
    <subcellularLocation>
        <location evidence="1">Cytoplasm</location>
    </subcellularLocation>
</comment>
<comment type="domain">
    <text evidence="1">The beta-hairpin motif is involved in DNA binding.</text>
</comment>
<comment type="similarity">
    <text evidence="1">Belongs to the UvrB family.</text>
</comment>
<feature type="chain" id="PRO_1000200558" description="UvrABC system protein B">
    <location>
        <begin position="1"/>
        <end position="663"/>
    </location>
</feature>
<feature type="domain" description="Helicase ATP-binding" evidence="1">
    <location>
        <begin position="31"/>
        <end position="271"/>
    </location>
</feature>
<feature type="domain" description="Helicase C-terminal" evidence="1">
    <location>
        <begin position="435"/>
        <end position="601"/>
    </location>
</feature>
<feature type="domain" description="UVR" evidence="1">
    <location>
        <begin position="627"/>
        <end position="662"/>
    </location>
</feature>
<feature type="short sequence motif" description="Beta-hairpin">
    <location>
        <begin position="97"/>
        <end position="120"/>
    </location>
</feature>
<feature type="binding site" evidence="1">
    <location>
        <begin position="44"/>
        <end position="51"/>
    </location>
    <ligand>
        <name>ATP</name>
        <dbReference type="ChEBI" id="CHEBI:30616"/>
    </ligand>
</feature>
<gene>
    <name evidence="1" type="primary">uvrB</name>
    <name type="ordered locus">SUB1151</name>
</gene>
<dbReference type="EMBL" id="AM946015">
    <property type="protein sequence ID" value="CAR42542.1"/>
    <property type="molecule type" value="Genomic_DNA"/>
</dbReference>
<dbReference type="RefSeq" id="WP_012658638.1">
    <property type="nucleotide sequence ID" value="NC_012004.1"/>
</dbReference>
<dbReference type="SMR" id="B9DSH1"/>
<dbReference type="STRING" id="218495.SUB1151"/>
<dbReference type="KEGG" id="sub:SUB1151"/>
<dbReference type="eggNOG" id="COG0556">
    <property type="taxonomic scope" value="Bacteria"/>
</dbReference>
<dbReference type="HOGENOM" id="CLU_009621_2_1_9"/>
<dbReference type="OrthoDB" id="9806651at2"/>
<dbReference type="Proteomes" id="UP000000449">
    <property type="component" value="Chromosome"/>
</dbReference>
<dbReference type="GO" id="GO:0005737">
    <property type="term" value="C:cytoplasm"/>
    <property type="evidence" value="ECO:0007669"/>
    <property type="project" value="UniProtKB-SubCell"/>
</dbReference>
<dbReference type="GO" id="GO:0009380">
    <property type="term" value="C:excinuclease repair complex"/>
    <property type="evidence" value="ECO:0007669"/>
    <property type="project" value="InterPro"/>
</dbReference>
<dbReference type="GO" id="GO:0005524">
    <property type="term" value="F:ATP binding"/>
    <property type="evidence" value="ECO:0007669"/>
    <property type="project" value="UniProtKB-UniRule"/>
</dbReference>
<dbReference type="GO" id="GO:0016887">
    <property type="term" value="F:ATP hydrolysis activity"/>
    <property type="evidence" value="ECO:0007669"/>
    <property type="project" value="InterPro"/>
</dbReference>
<dbReference type="GO" id="GO:0003677">
    <property type="term" value="F:DNA binding"/>
    <property type="evidence" value="ECO:0007669"/>
    <property type="project" value="UniProtKB-UniRule"/>
</dbReference>
<dbReference type="GO" id="GO:0009381">
    <property type="term" value="F:excinuclease ABC activity"/>
    <property type="evidence" value="ECO:0007669"/>
    <property type="project" value="UniProtKB-UniRule"/>
</dbReference>
<dbReference type="GO" id="GO:0004386">
    <property type="term" value="F:helicase activity"/>
    <property type="evidence" value="ECO:0007669"/>
    <property type="project" value="UniProtKB-KW"/>
</dbReference>
<dbReference type="GO" id="GO:0006289">
    <property type="term" value="P:nucleotide-excision repair"/>
    <property type="evidence" value="ECO:0007669"/>
    <property type="project" value="UniProtKB-UniRule"/>
</dbReference>
<dbReference type="GO" id="GO:0009432">
    <property type="term" value="P:SOS response"/>
    <property type="evidence" value="ECO:0007669"/>
    <property type="project" value="UniProtKB-UniRule"/>
</dbReference>
<dbReference type="CDD" id="cd17916">
    <property type="entry name" value="DEXHc_UvrB"/>
    <property type="match status" value="1"/>
</dbReference>
<dbReference type="CDD" id="cd18790">
    <property type="entry name" value="SF2_C_UvrB"/>
    <property type="match status" value="1"/>
</dbReference>
<dbReference type="Gene3D" id="3.40.50.300">
    <property type="entry name" value="P-loop containing nucleotide triphosphate hydrolases"/>
    <property type="match status" value="3"/>
</dbReference>
<dbReference type="Gene3D" id="4.10.860.10">
    <property type="entry name" value="UVR domain"/>
    <property type="match status" value="1"/>
</dbReference>
<dbReference type="HAMAP" id="MF_00204">
    <property type="entry name" value="UvrB"/>
    <property type="match status" value="1"/>
</dbReference>
<dbReference type="InterPro" id="IPR006935">
    <property type="entry name" value="Helicase/UvrB_N"/>
</dbReference>
<dbReference type="InterPro" id="IPR014001">
    <property type="entry name" value="Helicase_ATP-bd"/>
</dbReference>
<dbReference type="InterPro" id="IPR001650">
    <property type="entry name" value="Helicase_C-like"/>
</dbReference>
<dbReference type="InterPro" id="IPR027417">
    <property type="entry name" value="P-loop_NTPase"/>
</dbReference>
<dbReference type="InterPro" id="IPR001943">
    <property type="entry name" value="UVR_dom"/>
</dbReference>
<dbReference type="InterPro" id="IPR036876">
    <property type="entry name" value="UVR_dom_sf"/>
</dbReference>
<dbReference type="InterPro" id="IPR004807">
    <property type="entry name" value="UvrB"/>
</dbReference>
<dbReference type="InterPro" id="IPR041471">
    <property type="entry name" value="UvrB_inter"/>
</dbReference>
<dbReference type="InterPro" id="IPR024759">
    <property type="entry name" value="UvrB_YAD/RRR_dom"/>
</dbReference>
<dbReference type="NCBIfam" id="NF003673">
    <property type="entry name" value="PRK05298.1"/>
    <property type="match status" value="1"/>
</dbReference>
<dbReference type="NCBIfam" id="TIGR00631">
    <property type="entry name" value="uvrb"/>
    <property type="match status" value="1"/>
</dbReference>
<dbReference type="PANTHER" id="PTHR24029">
    <property type="entry name" value="UVRABC SYSTEM PROTEIN B"/>
    <property type="match status" value="1"/>
</dbReference>
<dbReference type="PANTHER" id="PTHR24029:SF0">
    <property type="entry name" value="UVRABC SYSTEM PROTEIN B"/>
    <property type="match status" value="1"/>
</dbReference>
<dbReference type="Pfam" id="PF00271">
    <property type="entry name" value="Helicase_C"/>
    <property type="match status" value="1"/>
</dbReference>
<dbReference type="Pfam" id="PF04851">
    <property type="entry name" value="ResIII"/>
    <property type="match status" value="1"/>
</dbReference>
<dbReference type="Pfam" id="PF02151">
    <property type="entry name" value="UVR"/>
    <property type="match status" value="1"/>
</dbReference>
<dbReference type="Pfam" id="PF12344">
    <property type="entry name" value="UvrB"/>
    <property type="match status" value="1"/>
</dbReference>
<dbReference type="Pfam" id="PF17757">
    <property type="entry name" value="UvrB_inter"/>
    <property type="match status" value="1"/>
</dbReference>
<dbReference type="SMART" id="SM00487">
    <property type="entry name" value="DEXDc"/>
    <property type="match status" value="1"/>
</dbReference>
<dbReference type="SMART" id="SM00490">
    <property type="entry name" value="HELICc"/>
    <property type="match status" value="1"/>
</dbReference>
<dbReference type="SUPFAM" id="SSF46600">
    <property type="entry name" value="C-terminal UvrC-binding domain of UvrB"/>
    <property type="match status" value="1"/>
</dbReference>
<dbReference type="SUPFAM" id="SSF52540">
    <property type="entry name" value="P-loop containing nucleoside triphosphate hydrolases"/>
    <property type="match status" value="2"/>
</dbReference>
<dbReference type="PROSITE" id="PS51192">
    <property type="entry name" value="HELICASE_ATP_BIND_1"/>
    <property type="match status" value="1"/>
</dbReference>
<dbReference type="PROSITE" id="PS51194">
    <property type="entry name" value="HELICASE_CTER"/>
    <property type="match status" value="1"/>
</dbReference>
<dbReference type="PROSITE" id="PS50151">
    <property type="entry name" value="UVR"/>
    <property type="match status" value="1"/>
</dbReference>
<protein>
    <recommendedName>
        <fullName evidence="1">UvrABC system protein B</fullName>
        <shortName evidence="1">Protein UvrB</shortName>
    </recommendedName>
    <alternativeName>
        <fullName evidence="1">Excinuclease ABC subunit B</fullName>
    </alternativeName>
</protein>
<keyword id="KW-0067">ATP-binding</keyword>
<keyword id="KW-0963">Cytoplasm</keyword>
<keyword id="KW-0227">DNA damage</keyword>
<keyword id="KW-0228">DNA excision</keyword>
<keyword id="KW-0234">DNA repair</keyword>
<keyword id="KW-0267">Excision nuclease</keyword>
<keyword id="KW-0347">Helicase</keyword>
<keyword id="KW-0378">Hydrolase</keyword>
<keyword id="KW-0547">Nucleotide-binding</keyword>
<keyword id="KW-1185">Reference proteome</keyword>
<keyword id="KW-0742">SOS response</keyword>
<sequence length="663" mass="75913">MIDRRDENTFKLVSKYQPSGDQPQAIEQLVDNIEGGEKAQILLGATGTGKTYTMSQVISKVNKPTLVIAHNKTLAGQLYGEFKEFFPENAVEYFVSYYDYYQPEAYVPSSDTYIEKDSSVNDEIDKLRHSATSSLLERNDVIVVASVSCIYGLGSPKEYADSAVSLRPGQEISRDQLLNQLVDIQFERNDFDFQRGRFRVRGDVVEVFPASRDEHAFRIEFFGDEIDRIREIESLTGKILGEAEHLVLFPATHFVTNDEHMEASIAKIQAELASQLKVFESEGKLLEAQRLKQRTEYDIEMLREMGYTNGVENYSRHMDGRSEGEPPYTLLDFFPEDFLIMIDESHMTMGQIKGMYNGDQARKKMLVDYGFRLPSALDNRPLRREEFESHVHQIVYVSATPGDYELEQTDTIVEQIIRPTGLLDPIVEVRPTMGQMDDLLGEINLRTERGERTFITTLTKKMAEDLTDYLKEMGVKVKYMHSDIKTLERTEIIRDLRLGVFDVLIGINLLREGIDVPEVSLVAILDADKEGFLRNERGLIQTIGRAARNSQGRVIMYADKMTESMQKAIDETARRRQIQMAYNEEHGIVPQTIKKEIRDLISITKGTNTEVEEESLDYSVMTKSERQEAIKKLQKQMHEAAELLDFELAAQIRDMVLELKSMD</sequence>
<reference key="1">
    <citation type="journal article" date="2009" name="BMC Genomics">
        <title>Evidence for niche adaptation in the genome of the bovine pathogen Streptococcus uberis.</title>
        <authorList>
            <person name="Ward P.N."/>
            <person name="Holden M.T.G."/>
            <person name="Leigh J.A."/>
            <person name="Lennard N."/>
            <person name="Bignell A."/>
            <person name="Barron A."/>
            <person name="Clark L."/>
            <person name="Quail M.A."/>
            <person name="Woodward J."/>
            <person name="Barrell B.G."/>
            <person name="Egan S.A."/>
            <person name="Field T.R."/>
            <person name="Maskell D."/>
            <person name="Kehoe M."/>
            <person name="Dowson C.G."/>
            <person name="Chanter N."/>
            <person name="Whatmore A.M."/>
            <person name="Bentley S.D."/>
            <person name="Parkhill J."/>
        </authorList>
    </citation>
    <scope>NUCLEOTIDE SEQUENCE [LARGE SCALE GENOMIC DNA]</scope>
    <source>
        <strain>ATCC BAA-854 / 0140J</strain>
    </source>
</reference>
<accession>B9DSH1</accession>
<proteinExistence type="inferred from homology"/>
<organism>
    <name type="scientific">Streptococcus uberis (strain ATCC BAA-854 / 0140J)</name>
    <dbReference type="NCBI Taxonomy" id="218495"/>
    <lineage>
        <taxon>Bacteria</taxon>
        <taxon>Bacillati</taxon>
        <taxon>Bacillota</taxon>
        <taxon>Bacilli</taxon>
        <taxon>Lactobacillales</taxon>
        <taxon>Streptococcaceae</taxon>
        <taxon>Streptococcus</taxon>
    </lineage>
</organism>
<evidence type="ECO:0000255" key="1">
    <source>
        <dbReference type="HAMAP-Rule" id="MF_00204"/>
    </source>
</evidence>